<comment type="function">
    <text>Regulates the expression of extracellular-protein genes of Bacillus subtilis.</text>
</comment>
<comment type="similarity">
    <text evidence="2">To B.natto SenN.</text>
</comment>
<comment type="sequence caution" evidence="2">
    <conflict type="erroneous initiation">
        <sequence resource="EMBL-CDS" id="CAB12709"/>
    </conflict>
</comment>
<sequence>MGVKKEKGRKRFRKRKTYGNQILPLELLIEKNKREIINSAELMEEIYMKIDEKHTQCVTKYKKTR</sequence>
<evidence type="ECO:0000250" key="1"/>
<evidence type="ECO:0000305" key="2"/>
<accession>P21344</accession>
<reference key="1">
    <citation type="journal article" date="1990" name="J. Bacteriol.">
        <title>Complex character of senS, a novel gene regulating expression of extracellular-protein genes of Bacillus subtilis.</title>
        <authorList>
            <person name="Wang L.-F."/>
            <person name="Doi R.H."/>
        </authorList>
    </citation>
    <scope>NUCLEOTIDE SEQUENCE [GENOMIC DNA]</scope>
</reference>
<reference key="2">
    <citation type="journal article" date="1997" name="Microbiology">
        <title>The Bacillus subtilis 168 chromosome from sspE to katA.</title>
        <authorList>
            <person name="Cummings N.J."/>
            <person name="Connerton I.F."/>
        </authorList>
    </citation>
    <scope>NUCLEOTIDE SEQUENCE [GENOMIC DNA]</scope>
    <source>
        <strain>168</strain>
    </source>
</reference>
<reference key="3">
    <citation type="journal article" date="1997" name="Nature">
        <title>The complete genome sequence of the Gram-positive bacterium Bacillus subtilis.</title>
        <authorList>
            <person name="Kunst F."/>
            <person name="Ogasawara N."/>
            <person name="Moszer I."/>
            <person name="Albertini A.M."/>
            <person name="Alloni G."/>
            <person name="Azevedo V."/>
            <person name="Bertero M.G."/>
            <person name="Bessieres P."/>
            <person name="Bolotin A."/>
            <person name="Borchert S."/>
            <person name="Borriss R."/>
            <person name="Boursier L."/>
            <person name="Brans A."/>
            <person name="Braun M."/>
            <person name="Brignell S.C."/>
            <person name="Bron S."/>
            <person name="Brouillet S."/>
            <person name="Bruschi C.V."/>
            <person name="Caldwell B."/>
            <person name="Capuano V."/>
            <person name="Carter N.M."/>
            <person name="Choi S.-K."/>
            <person name="Codani J.-J."/>
            <person name="Connerton I.F."/>
            <person name="Cummings N.J."/>
            <person name="Daniel R.A."/>
            <person name="Denizot F."/>
            <person name="Devine K.M."/>
            <person name="Duesterhoeft A."/>
            <person name="Ehrlich S.D."/>
            <person name="Emmerson P.T."/>
            <person name="Entian K.-D."/>
            <person name="Errington J."/>
            <person name="Fabret C."/>
            <person name="Ferrari E."/>
            <person name="Foulger D."/>
            <person name="Fritz C."/>
            <person name="Fujita M."/>
            <person name="Fujita Y."/>
            <person name="Fuma S."/>
            <person name="Galizzi A."/>
            <person name="Galleron N."/>
            <person name="Ghim S.-Y."/>
            <person name="Glaser P."/>
            <person name="Goffeau A."/>
            <person name="Golightly E.J."/>
            <person name="Grandi G."/>
            <person name="Guiseppi G."/>
            <person name="Guy B.J."/>
            <person name="Haga K."/>
            <person name="Haiech J."/>
            <person name="Harwood C.R."/>
            <person name="Henaut A."/>
            <person name="Hilbert H."/>
            <person name="Holsappel S."/>
            <person name="Hosono S."/>
            <person name="Hullo M.-F."/>
            <person name="Itaya M."/>
            <person name="Jones L.-M."/>
            <person name="Joris B."/>
            <person name="Karamata D."/>
            <person name="Kasahara Y."/>
            <person name="Klaerr-Blanchard M."/>
            <person name="Klein C."/>
            <person name="Kobayashi Y."/>
            <person name="Koetter P."/>
            <person name="Koningstein G."/>
            <person name="Krogh S."/>
            <person name="Kumano M."/>
            <person name="Kurita K."/>
            <person name="Lapidus A."/>
            <person name="Lardinois S."/>
            <person name="Lauber J."/>
            <person name="Lazarevic V."/>
            <person name="Lee S.-M."/>
            <person name="Levine A."/>
            <person name="Liu H."/>
            <person name="Masuda S."/>
            <person name="Mauel C."/>
            <person name="Medigue C."/>
            <person name="Medina N."/>
            <person name="Mellado R.P."/>
            <person name="Mizuno M."/>
            <person name="Moestl D."/>
            <person name="Nakai S."/>
            <person name="Noback M."/>
            <person name="Noone D."/>
            <person name="O'Reilly M."/>
            <person name="Ogawa K."/>
            <person name="Ogiwara A."/>
            <person name="Oudega B."/>
            <person name="Park S.-H."/>
            <person name="Parro V."/>
            <person name="Pohl T.M."/>
            <person name="Portetelle D."/>
            <person name="Porwollik S."/>
            <person name="Prescott A.M."/>
            <person name="Presecan E."/>
            <person name="Pujic P."/>
            <person name="Purnelle B."/>
            <person name="Rapoport G."/>
            <person name="Rey M."/>
            <person name="Reynolds S."/>
            <person name="Rieger M."/>
            <person name="Rivolta C."/>
            <person name="Rocha E."/>
            <person name="Roche B."/>
            <person name="Rose M."/>
            <person name="Sadaie Y."/>
            <person name="Sato T."/>
            <person name="Scanlan E."/>
            <person name="Schleich S."/>
            <person name="Schroeter R."/>
            <person name="Scoffone F."/>
            <person name="Sekiguchi J."/>
            <person name="Sekowska A."/>
            <person name="Seror S.J."/>
            <person name="Serror P."/>
            <person name="Shin B.-S."/>
            <person name="Soldo B."/>
            <person name="Sorokin A."/>
            <person name="Tacconi E."/>
            <person name="Takagi T."/>
            <person name="Takahashi H."/>
            <person name="Takemaru K."/>
            <person name="Takeuchi M."/>
            <person name="Tamakoshi A."/>
            <person name="Tanaka T."/>
            <person name="Terpstra P."/>
            <person name="Tognoni A."/>
            <person name="Tosato V."/>
            <person name="Uchiyama S."/>
            <person name="Vandenbol M."/>
            <person name="Vannier F."/>
            <person name="Vassarotti A."/>
            <person name="Viari A."/>
            <person name="Wambutt R."/>
            <person name="Wedler E."/>
            <person name="Wedler H."/>
            <person name="Weitzenegger T."/>
            <person name="Winters P."/>
            <person name="Wipat A."/>
            <person name="Yamamoto H."/>
            <person name="Yamane K."/>
            <person name="Yasumoto K."/>
            <person name="Yata K."/>
            <person name="Yoshida K."/>
            <person name="Yoshikawa H.-F."/>
            <person name="Zumstein E."/>
            <person name="Yoshikawa H."/>
            <person name="Danchin A."/>
        </authorList>
    </citation>
    <scope>NUCLEOTIDE SEQUENCE [LARGE SCALE GENOMIC DNA]</scope>
    <source>
        <strain>168</strain>
    </source>
</reference>
<feature type="chain" id="PRO_0000097677" description="Transcriptional regulatory protein SenS">
    <location>
        <begin position="1"/>
        <end position="65"/>
    </location>
</feature>
<feature type="DNA-binding region" description="H-T-H motif" evidence="1">
    <location>
        <begin position="11"/>
        <end position="31"/>
    </location>
</feature>
<protein>
    <recommendedName>
        <fullName>Transcriptional regulatory protein SenS</fullName>
    </recommendedName>
</protein>
<name>SENS_BACSU</name>
<keyword id="KW-0238">DNA-binding</keyword>
<keyword id="KW-1185">Reference proteome</keyword>
<keyword id="KW-0804">Transcription</keyword>
<keyword id="KW-0805">Transcription regulation</keyword>
<dbReference type="EMBL" id="M34826">
    <property type="protein sequence ID" value="AAA22750.1"/>
    <property type="molecule type" value="Genomic_DNA"/>
</dbReference>
<dbReference type="EMBL" id="Z82044">
    <property type="protein sequence ID" value="CAB04806.1"/>
    <property type="molecule type" value="Genomic_DNA"/>
</dbReference>
<dbReference type="EMBL" id="AL009126">
    <property type="protein sequence ID" value="CAB12709.1"/>
    <property type="status" value="ALT_INIT"/>
    <property type="molecule type" value="Genomic_DNA"/>
</dbReference>
<dbReference type="PIR" id="B69705">
    <property type="entry name" value="B69705"/>
</dbReference>
<dbReference type="RefSeq" id="NP_388761.2">
    <property type="nucleotide sequence ID" value="NC_000964.3"/>
</dbReference>
<dbReference type="RefSeq" id="WP_003245192.1">
    <property type="nucleotide sequence ID" value="NZ_OZ025638.1"/>
</dbReference>
<dbReference type="SMR" id="P21344"/>
<dbReference type="FunCoup" id="P21344">
    <property type="interactions" value="180"/>
</dbReference>
<dbReference type="PaxDb" id="224308-BSU08810"/>
<dbReference type="EnsemblBacteria" id="CAB12709">
    <property type="protein sequence ID" value="CAB12709"/>
    <property type="gene ID" value="BSU_08810"/>
</dbReference>
<dbReference type="GeneID" id="936207"/>
<dbReference type="KEGG" id="bsu:BSU08810"/>
<dbReference type="PATRIC" id="fig|224308.179.peg.951"/>
<dbReference type="InParanoid" id="P21344"/>
<dbReference type="OrthoDB" id="2939130at2"/>
<dbReference type="BioCyc" id="BSUB:BSU08810-MONOMER"/>
<dbReference type="Proteomes" id="UP000001570">
    <property type="component" value="Chromosome"/>
</dbReference>
<dbReference type="GO" id="GO:0003677">
    <property type="term" value="F:DNA binding"/>
    <property type="evidence" value="ECO:0007669"/>
    <property type="project" value="UniProtKB-KW"/>
</dbReference>
<dbReference type="InterPro" id="IPR025004">
    <property type="entry name" value="SenN/SenS"/>
</dbReference>
<dbReference type="Pfam" id="PF13040">
    <property type="entry name" value="Fur_reg_FbpB"/>
    <property type="match status" value="1"/>
</dbReference>
<organism>
    <name type="scientific">Bacillus subtilis (strain 168)</name>
    <dbReference type="NCBI Taxonomy" id="224308"/>
    <lineage>
        <taxon>Bacteria</taxon>
        <taxon>Bacillati</taxon>
        <taxon>Bacillota</taxon>
        <taxon>Bacilli</taxon>
        <taxon>Bacillales</taxon>
        <taxon>Bacillaceae</taxon>
        <taxon>Bacillus</taxon>
    </lineage>
</organism>
<gene>
    <name type="primary">senS</name>
    <name type="ordered locus">BSU08810</name>
</gene>
<proteinExistence type="predicted"/>